<reference key="1">
    <citation type="journal article" date="2007" name="Nat. Biotechnol.">
        <title>Comparative analysis of the complete genome sequence of the plant growth-promoting bacterium Bacillus amyloliquefaciens FZB42.</title>
        <authorList>
            <person name="Chen X.H."/>
            <person name="Koumoutsi A."/>
            <person name="Scholz R."/>
            <person name="Eisenreich A."/>
            <person name="Schneider K."/>
            <person name="Heinemeyer I."/>
            <person name="Morgenstern B."/>
            <person name="Voss B."/>
            <person name="Hess W.R."/>
            <person name="Reva O."/>
            <person name="Junge H."/>
            <person name="Voigt B."/>
            <person name="Jungblut P.R."/>
            <person name="Vater J."/>
            <person name="Suessmuth R."/>
            <person name="Liesegang H."/>
            <person name="Strittmatter A."/>
            <person name="Gottschalk G."/>
            <person name="Borriss R."/>
        </authorList>
    </citation>
    <scope>NUCLEOTIDE SEQUENCE [LARGE SCALE GENOMIC DNA]</scope>
    <source>
        <strain>DSM 23117 / BGSC 10A6 / LMG 26770 / FZB42</strain>
    </source>
</reference>
<dbReference type="EC" id="3.1.26.4" evidence="1"/>
<dbReference type="EMBL" id="CP000560">
    <property type="protein sequence ID" value="ABS73952.1"/>
    <property type="molecule type" value="Genomic_DNA"/>
</dbReference>
<dbReference type="RefSeq" id="WP_007611398.1">
    <property type="nucleotide sequence ID" value="NC_009725.2"/>
</dbReference>
<dbReference type="SMR" id="A7Z4M6"/>
<dbReference type="GeneID" id="93080722"/>
<dbReference type="KEGG" id="bay:RBAM_015890"/>
<dbReference type="HOGENOM" id="CLU_036532_2_1_9"/>
<dbReference type="Proteomes" id="UP000001120">
    <property type="component" value="Chromosome"/>
</dbReference>
<dbReference type="GO" id="GO:0005737">
    <property type="term" value="C:cytoplasm"/>
    <property type="evidence" value="ECO:0007669"/>
    <property type="project" value="UniProtKB-SubCell"/>
</dbReference>
<dbReference type="GO" id="GO:0032299">
    <property type="term" value="C:ribonuclease H2 complex"/>
    <property type="evidence" value="ECO:0007669"/>
    <property type="project" value="TreeGrafter"/>
</dbReference>
<dbReference type="GO" id="GO:0030145">
    <property type="term" value="F:manganese ion binding"/>
    <property type="evidence" value="ECO:0007669"/>
    <property type="project" value="UniProtKB-UniRule"/>
</dbReference>
<dbReference type="GO" id="GO:0003723">
    <property type="term" value="F:RNA binding"/>
    <property type="evidence" value="ECO:0007669"/>
    <property type="project" value="InterPro"/>
</dbReference>
<dbReference type="GO" id="GO:0004523">
    <property type="term" value="F:RNA-DNA hybrid ribonuclease activity"/>
    <property type="evidence" value="ECO:0007669"/>
    <property type="project" value="UniProtKB-UniRule"/>
</dbReference>
<dbReference type="GO" id="GO:0043137">
    <property type="term" value="P:DNA replication, removal of RNA primer"/>
    <property type="evidence" value="ECO:0007669"/>
    <property type="project" value="TreeGrafter"/>
</dbReference>
<dbReference type="GO" id="GO:0006298">
    <property type="term" value="P:mismatch repair"/>
    <property type="evidence" value="ECO:0007669"/>
    <property type="project" value="TreeGrafter"/>
</dbReference>
<dbReference type="CDD" id="cd07182">
    <property type="entry name" value="RNase_HII_bacteria_HII_like"/>
    <property type="match status" value="1"/>
</dbReference>
<dbReference type="FunFam" id="3.30.420.10:FF:000006">
    <property type="entry name" value="Ribonuclease HII"/>
    <property type="match status" value="1"/>
</dbReference>
<dbReference type="Gene3D" id="3.30.420.10">
    <property type="entry name" value="Ribonuclease H-like superfamily/Ribonuclease H"/>
    <property type="match status" value="1"/>
</dbReference>
<dbReference type="HAMAP" id="MF_00052_B">
    <property type="entry name" value="RNase_HII_B"/>
    <property type="match status" value="1"/>
</dbReference>
<dbReference type="InterPro" id="IPR022898">
    <property type="entry name" value="RNase_HII"/>
</dbReference>
<dbReference type="InterPro" id="IPR001352">
    <property type="entry name" value="RNase_HII/HIII"/>
</dbReference>
<dbReference type="InterPro" id="IPR024567">
    <property type="entry name" value="RNase_HII/HIII_dom"/>
</dbReference>
<dbReference type="InterPro" id="IPR012337">
    <property type="entry name" value="RNaseH-like_sf"/>
</dbReference>
<dbReference type="InterPro" id="IPR036397">
    <property type="entry name" value="RNaseH_sf"/>
</dbReference>
<dbReference type="NCBIfam" id="NF000594">
    <property type="entry name" value="PRK00015.1-1"/>
    <property type="match status" value="1"/>
</dbReference>
<dbReference type="NCBIfam" id="NF000595">
    <property type="entry name" value="PRK00015.1-3"/>
    <property type="match status" value="1"/>
</dbReference>
<dbReference type="PANTHER" id="PTHR10954">
    <property type="entry name" value="RIBONUCLEASE H2 SUBUNIT A"/>
    <property type="match status" value="1"/>
</dbReference>
<dbReference type="PANTHER" id="PTHR10954:SF18">
    <property type="entry name" value="RIBONUCLEASE HII"/>
    <property type="match status" value="1"/>
</dbReference>
<dbReference type="Pfam" id="PF01351">
    <property type="entry name" value="RNase_HII"/>
    <property type="match status" value="1"/>
</dbReference>
<dbReference type="SUPFAM" id="SSF53098">
    <property type="entry name" value="Ribonuclease H-like"/>
    <property type="match status" value="1"/>
</dbReference>
<dbReference type="PROSITE" id="PS51975">
    <property type="entry name" value="RNASE_H_2"/>
    <property type="match status" value="1"/>
</dbReference>
<keyword id="KW-0963">Cytoplasm</keyword>
<keyword id="KW-0255">Endonuclease</keyword>
<keyword id="KW-0378">Hydrolase</keyword>
<keyword id="KW-0464">Manganese</keyword>
<keyword id="KW-0479">Metal-binding</keyword>
<keyword id="KW-0540">Nuclease</keyword>
<accession>A7Z4M6</accession>
<proteinExistence type="inferred from homology"/>
<organism>
    <name type="scientific">Bacillus velezensis (strain DSM 23117 / BGSC 10A6 / LMG 26770 / FZB42)</name>
    <name type="common">Bacillus amyloliquefaciens subsp. plantarum</name>
    <dbReference type="NCBI Taxonomy" id="326423"/>
    <lineage>
        <taxon>Bacteria</taxon>
        <taxon>Bacillati</taxon>
        <taxon>Bacillota</taxon>
        <taxon>Bacilli</taxon>
        <taxon>Bacillales</taxon>
        <taxon>Bacillaceae</taxon>
        <taxon>Bacillus</taxon>
        <taxon>Bacillus amyloliquefaciens group</taxon>
    </lineage>
</organism>
<evidence type="ECO:0000255" key="1">
    <source>
        <dbReference type="HAMAP-Rule" id="MF_00052"/>
    </source>
</evidence>
<evidence type="ECO:0000255" key="2">
    <source>
        <dbReference type="PROSITE-ProRule" id="PRU01319"/>
    </source>
</evidence>
<protein>
    <recommendedName>
        <fullName evidence="1">Ribonuclease HII</fullName>
        <shortName evidence="1">RNase HII</shortName>
        <ecNumber evidence="1">3.1.26.4</ecNumber>
    </recommendedName>
</protein>
<gene>
    <name evidence="1" type="primary">rnhB</name>
    <name type="ordered locus">RBAM_015890</name>
</gene>
<feature type="chain" id="PRO_1000031115" description="Ribonuclease HII">
    <location>
        <begin position="1"/>
        <end position="255"/>
    </location>
</feature>
<feature type="domain" description="RNase H type-2" evidence="2">
    <location>
        <begin position="72"/>
        <end position="255"/>
    </location>
</feature>
<feature type="binding site" evidence="1">
    <location>
        <position position="78"/>
    </location>
    <ligand>
        <name>a divalent metal cation</name>
        <dbReference type="ChEBI" id="CHEBI:60240"/>
    </ligand>
</feature>
<feature type="binding site" evidence="1">
    <location>
        <position position="79"/>
    </location>
    <ligand>
        <name>a divalent metal cation</name>
        <dbReference type="ChEBI" id="CHEBI:60240"/>
    </ligand>
</feature>
<feature type="binding site" evidence="1">
    <location>
        <position position="170"/>
    </location>
    <ligand>
        <name>a divalent metal cation</name>
        <dbReference type="ChEBI" id="CHEBI:60240"/>
    </ligand>
</feature>
<comment type="function">
    <text evidence="1">Endonuclease that specifically degrades the RNA of RNA-DNA hybrids.</text>
</comment>
<comment type="catalytic activity">
    <reaction evidence="1">
        <text>Endonucleolytic cleavage to 5'-phosphomonoester.</text>
        <dbReference type="EC" id="3.1.26.4"/>
    </reaction>
</comment>
<comment type="cofactor">
    <cofactor evidence="1">
        <name>Mn(2+)</name>
        <dbReference type="ChEBI" id="CHEBI:29035"/>
    </cofactor>
    <cofactor evidence="1">
        <name>Mg(2+)</name>
        <dbReference type="ChEBI" id="CHEBI:18420"/>
    </cofactor>
    <text evidence="1">Manganese or magnesium. Binds 1 divalent metal ion per monomer in the absence of substrate. May bind a second metal ion after substrate binding.</text>
</comment>
<comment type="subcellular location">
    <subcellularLocation>
        <location evidence="1">Cytoplasm</location>
    </subcellularLocation>
</comment>
<comment type="similarity">
    <text evidence="1">Belongs to the RNase HII family.</text>
</comment>
<sequence length="255" mass="28179">MNTLTVKSVKERLQEVRDESDPFLAQCEKDPRKSVQTLLEQWLKKHAKEKALKEQWLNMTAYERLSSKKGFRLIAGVDEAGRGPLAGPVVAGAVILPAECEILGLTDSKKLSEKKLEEYYSRITEEAAAVGVGIVHADVIDRINIYEAARLAMVKAVNALTETPDYLLVDAMTLPLDIPQSSVIKGDAKSVSIAAGACIAKVTRDRLMAEYAKTYPMYGFEKNKGYGTKEHLEALQAYGPTTIHRKTFAPVQSYC</sequence>
<name>RNH2_BACVZ</name>